<reference key="1">
    <citation type="journal article" date="2007" name="Proc. Natl. Acad. Sci. U.S.A.">
        <title>Deep-sea vent epsilon-proteobacterial genomes provide insights into emergence of pathogens.</title>
        <authorList>
            <person name="Nakagawa S."/>
            <person name="Takaki Y."/>
            <person name="Shimamura S."/>
            <person name="Reysenbach A.-L."/>
            <person name="Takai K."/>
            <person name="Horikoshi K."/>
        </authorList>
    </citation>
    <scope>NUCLEOTIDE SEQUENCE [LARGE SCALE GENOMIC DNA]</scope>
    <source>
        <strain>SB155-2</strain>
    </source>
</reference>
<comment type="catalytic activity">
    <reaction evidence="1">
        <text>(S)-4-amino-5-oxopentanoate = 5-aminolevulinate</text>
        <dbReference type="Rhea" id="RHEA:14265"/>
        <dbReference type="ChEBI" id="CHEBI:57501"/>
        <dbReference type="ChEBI" id="CHEBI:356416"/>
        <dbReference type="EC" id="5.4.3.8"/>
    </reaction>
</comment>
<comment type="cofactor">
    <cofactor evidence="1">
        <name>pyridoxal 5'-phosphate</name>
        <dbReference type="ChEBI" id="CHEBI:597326"/>
    </cofactor>
</comment>
<comment type="pathway">
    <text evidence="1">Porphyrin-containing compound metabolism; protoporphyrin-IX biosynthesis; 5-aminolevulinate from L-glutamyl-tRNA(Glu): step 2/2.</text>
</comment>
<comment type="subunit">
    <text evidence="1">Homodimer.</text>
</comment>
<comment type="subcellular location">
    <subcellularLocation>
        <location evidence="1">Cytoplasm</location>
    </subcellularLocation>
</comment>
<comment type="similarity">
    <text evidence="1">Belongs to the class-III pyridoxal-phosphate-dependent aminotransferase family. HemL subfamily.</text>
</comment>
<proteinExistence type="inferred from homology"/>
<protein>
    <recommendedName>
        <fullName evidence="1">Glutamate-1-semialdehyde 2,1-aminomutase</fullName>
        <shortName evidence="1">GSA</shortName>
        <ecNumber evidence="1">5.4.3.8</ecNumber>
    </recommendedName>
    <alternativeName>
        <fullName evidence="1">Glutamate-1-semialdehyde aminotransferase</fullName>
        <shortName evidence="1">GSA-AT</shortName>
    </alternativeName>
</protein>
<evidence type="ECO:0000255" key="1">
    <source>
        <dbReference type="HAMAP-Rule" id="MF_00375"/>
    </source>
</evidence>
<accession>A6Q2X6</accession>
<gene>
    <name evidence="1" type="primary">hemL</name>
    <name type="ordered locus">NIS_0721</name>
</gene>
<feature type="chain" id="PRO_0000382352" description="Glutamate-1-semialdehyde 2,1-aminomutase">
    <location>
        <begin position="1"/>
        <end position="427"/>
    </location>
</feature>
<feature type="modified residue" description="N6-(pyridoxal phosphate)lysine" evidence="1">
    <location>
        <position position="265"/>
    </location>
</feature>
<dbReference type="EC" id="5.4.3.8" evidence="1"/>
<dbReference type="EMBL" id="AP009178">
    <property type="protein sequence ID" value="BAF69835.1"/>
    <property type="molecule type" value="Genomic_DNA"/>
</dbReference>
<dbReference type="RefSeq" id="WP_012082098.1">
    <property type="nucleotide sequence ID" value="NC_009662.1"/>
</dbReference>
<dbReference type="SMR" id="A6Q2X6"/>
<dbReference type="FunCoup" id="A6Q2X6">
    <property type="interactions" value="498"/>
</dbReference>
<dbReference type="STRING" id="387092.NIS_0721"/>
<dbReference type="KEGG" id="nis:NIS_0721"/>
<dbReference type="eggNOG" id="COG0001">
    <property type="taxonomic scope" value="Bacteria"/>
</dbReference>
<dbReference type="HOGENOM" id="CLU_016922_1_5_7"/>
<dbReference type="InParanoid" id="A6Q2X6"/>
<dbReference type="OrthoDB" id="9801052at2"/>
<dbReference type="UniPathway" id="UPA00251">
    <property type="reaction ID" value="UER00317"/>
</dbReference>
<dbReference type="Proteomes" id="UP000001118">
    <property type="component" value="Chromosome"/>
</dbReference>
<dbReference type="GO" id="GO:0005737">
    <property type="term" value="C:cytoplasm"/>
    <property type="evidence" value="ECO:0007669"/>
    <property type="project" value="UniProtKB-SubCell"/>
</dbReference>
<dbReference type="GO" id="GO:0042286">
    <property type="term" value="F:glutamate-1-semialdehyde 2,1-aminomutase activity"/>
    <property type="evidence" value="ECO:0007669"/>
    <property type="project" value="UniProtKB-UniRule"/>
</dbReference>
<dbReference type="GO" id="GO:0030170">
    <property type="term" value="F:pyridoxal phosphate binding"/>
    <property type="evidence" value="ECO:0007669"/>
    <property type="project" value="InterPro"/>
</dbReference>
<dbReference type="GO" id="GO:0008483">
    <property type="term" value="F:transaminase activity"/>
    <property type="evidence" value="ECO:0007669"/>
    <property type="project" value="InterPro"/>
</dbReference>
<dbReference type="GO" id="GO:0006782">
    <property type="term" value="P:protoporphyrinogen IX biosynthetic process"/>
    <property type="evidence" value="ECO:0007669"/>
    <property type="project" value="UniProtKB-UniRule"/>
</dbReference>
<dbReference type="CDD" id="cd00610">
    <property type="entry name" value="OAT_like"/>
    <property type="match status" value="1"/>
</dbReference>
<dbReference type="FunFam" id="3.40.640.10:FF:000021">
    <property type="entry name" value="Glutamate-1-semialdehyde 2,1-aminomutase"/>
    <property type="match status" value="1"/>
</dbReference>
<dbReference type="Gene3D" id="3.90.1150.10">
    <property type="entry name" value="Aspartate Aminotransferase, domain 1"/>
    <property type="match status" value="1"/>
</dbReference>
<dbReference type="Gene3D" id="3.40.640.10">
    <property type="entry name" value="Type I PLP-dependent aspartate aminotransferase-like (Major domain)"/>
    <property type="match status" value="1"/>
</dbReference>
<dbReference type="HAMAP" id="MF_00375">
    <property type="entry name" value="HemL_aminotrans_3"/>
    <property type="match status" value="1"/>
</dbReference>
<dbReference type="InterPro" id="IPR004639">
    <property type="entry name" value="4pyrrol_synth_GluAld_NH2Trfase"/>
</dbReference>
<dbReference type="InterPro" id="IPR005814">
    <property type="entry name" value="Aminotrans_3"/>
</dbReference>
<dbReference type="InterPro" id="IPR049704">
    <property type="entry name" value="Aminotrans_3_PPA_site"/>
</dbReference>
<dbReference type="InterPro" id="IPR015424">
    <property type="entry name" value="PyrdxlP-dep_Trfase"/>
</dbReference>
<dbReference type="InterPro" id="IPR015421">
    <property type="entry name" value="PyrdxlP-dep_Trfase_major"/>
</dbReference>
<dbReference type="InterPro" id="IPR015422">
    <property type="entry name" value="PyrdxlP-dep_Trfase_small"/>
</dbReference>
<dbReference type="NCBIfam" id="TIGR00713">
    <property type="entry name" value="hemL"/>
    <property type="match status" value="1"/>
</dbReference>
<dbReference type="NCBIfam" id="NF000818">
    <property type="entry name" value="PRK00062.1"/>
    <property type="match status" value="1"/>
</dbReference>
<dbReference type="PANTHER" id="PTHR43713">
    <property type="entry name" value="GLUTAMATE-1-SEMIALDEHYDE 2,1-AMINOMUTASE"/>
    <property type="match status" value="1"/>
</dbReference>
<dbReference type="PANTHER" id="PTHR43713:SF3">
    <property type="entry name" value="GLUTAMATE-1-SEMIALDEHYDE 2,1-AMINOMUTASE 1, CHLOROPLASTIC-RELATED"/>
    <property type="match status" value="1"/>
</dbReference>
<dbReference type="Pfam" id="PF00202">
    <property type="entry name" value="Aminotran_3"/>
    <property type="match status" value="1"/>
</dbReference>
<dbReference type="SUPFAM" id="SSF53383">
    <property type="entry name" value="PLP-dependent transferases"/>
    <property type="match status" value="1"/>
</dbReference>
<dbReference type="PROSITE" id="PS00600">
    <property type="entry name" value="AA_TRANSFER_CLASS_3"/>
    <property type="match status" value="1"/>
</dbReference>
<sequence length="427" mass="46394">MLSKSEAAYKEALRYIPGGVDSPVRAFKSVGGVPPFIDRGEGAFLYDIDGNRYIDYVQSWGPLIFGHADKETLEAVCEQAQKGLSFGTPTLLETELAREIVELFDNIDKIRFVSSGTEAVMSAIRLARGYTGRDDIVKFEGCYHGHSDSLLVSAGSGAATFGNPSSPGVPADFTKHTLLARYNDIESVKRCFQASDNIACVIIEPIAGNMGLVPAEEEFLQDLRKLCDEHGALLIFDEVMSGFRASLKGAQGFTSVVPDMVTFGKVIGGGMPVGAFGARAEIMAHLSPEGPVYQAGTLSGNPVAMVAGLSVIRRLKNDPSIYEVLEARAKGLVGGFKKIADSFGVPLQVDVRGSMFGFFFNEKPVKNFDDAKQSDLEFFAKFHQEMIKRGIYFACSQFEAGFICTPLDEKLIDETLEKIEEGLKKIV</sequence>
<organism>
    <name type="scientific">Nitratiruptor sp. (strain SB155-2)</name>
    <dbReference type="NCBI Taxonomy" id="387092"/>
    <lineage>
        <taxon>Bacteria</taxon>
        <taxon>Pseudomonadati</taxon>
        <taxon>Campylobacterota</taxon>
        <taxon>Epsilonproteobacteria</taxon>
        <taxon>Nautiliales</taxon>
        <taxon>Nitratiruptoraceae</taxon>
        <taxon>Nitratiruptor</taxon>
    </lineage>
</organism>
<name>GSA_NITSB</name>
<keyword id="KW-0963">Cytoplasm</keyword>
<keyword id="KW-0413">Isomerase</keyword>
<keyword id="KW-0627">Porphyrin biosynthesis</keyword>
<keyword id="KW-0663">Pyridoxal phosphate</keyword>
<keyword id="KW-1185">Reference proteome</keyword>